<geneLocation type="chloroplast"/>
<feature type="chain" id="PRO_0000216619" description="Photosystem II reaction center protein J">
    <location>
        <begin position="1"/>
        <end position="40"/>
    </location>
</feature>
<feature type="transmembrane region" description="Helical" evidence="1">
    <location>
        <begin position="8"/>
        <end position="28"/>
    </location>
</feature>
<feature type="helix" evidence="2">
    <location>
        <begin position="10"/>
        <end position="32"/>
    </location>
</feature>
<feature type="strand" evidence="2">
    <location>
        <begin position="33"/>
        <end position="35"/>
    </location>
</feature>
<evidence type="ECO:0000255" key="1">
    <source>
        <dbReference type="HAMAP-Rule" id="MF_01305"/>
    </source>
</evidence>
<evidence type="ECO:0007829" key="2">
    <source>
        <dbReference type="PDB" id="3JCU"/>
    </source>
</evidence>
<name>PSBJ_SPIOL</name>
<organism>
    <name type="scientific">Spinacia oleracea</name>
    <name type="common">Spinach</name>
    <dbReference type="NCBI Taxonomy" id="3562"/>
    <lineage>
        <taxon>Eukaryota</taxon>
        <taxon>Viridiplantae</taxon>
        <taxon>Streptophyta</taxon>
        <taxon>Embryophyta</taxon>
        <taxon>Tracheophyta</taxon>
        <taxon>Spermatophyta</taxon>
        <taxon>Magnoliopsida</taxon>
        <taxon>eudicotyledons</taxon>
        <taxon>Gunneridae</taxon>
        <taxon>Pentapetalae</taxon>
        <taxon>Caryophyllales</taxon>
        <taxon>Chenopodiaceae</taxon>
        <taxon>Chenopodioideae</taxon>
        <taxon>Anserineae</taxon>
        <taxon>Spinacia</taxon>
    </lineage>
</organism>
<proteinExistence type="evidence at protein level"/>
<reference key="1">
    <citation type="journal article" date="2001" name="Plant Mol. Biol.">
        <title>The plastid chromosome of spinach (Spinacia oleracea): complete nucleotide sequence and gene organization.</title>
        <authorList>
            <person name="Schmitz-Linneweber C."/>
            <person name="Maier R.M."/>
            <person name="Alcaraz J.-P."/>
            <person name="Cottet A."/>
            <person name="Herrmann R.G."/>
            <person name="Mache R."/>
        </authorList>
    </citation>
    <scope>NUCLEOTIDE SEQUENCE [LARGE SCALE GENOMIC DNA]</scope>
    <source>
        <strain>cv. Geant d'hiver</strain>
        <strain>cv. Monatol</strain>
    </source>
</reference>
<accession>Q9M3L2</accession>
<sequence length="40" mass="4117">MADTTGRIPLWIIGTVAGILVIGLVGIFFYGSYSGLGSSL</sequence>
<comment type="function">
    <text evidence="1">One of the components of the core complex of photosystem II (PSII). PSII is a light-driven water:plastoquinone oxidoreductase that uses light energy to abstract electrons from H(2)O, generating O(2) and a proton gradient subsequently used for ATP formation. It consists of a core antenna complex that captures photons, and an electron transfer chain that converts photonic excitation into a charge separation.</text>
</comment>
<comment type="subunit">
    <text evidence="1">PSII is composed of 1 copy each of membrane proteins PsbA, PsbB, PsbC, PsbD, PsbE, PsbF, PsbH, PsbI, PsbJ, PsbK, PsbL, PsbM, PsbT, PsbX, PsbY, PsbZ, Psb30/Ycf12, at least 3 peripheral proteins of the oxygen-evolving complex and a large number of cofactors. It forms dimeric complexes.</text>
</comment>
<comment type="subcellular location">
    <subcellularLocation>
        <location evidence="1">Plastid</location>
        <location evidence="1">Chloroplast thylakoid membrane</location>
        <topology evidence="1">Single-pass membrane protein</topology>
    </subcellularLocation>
</comment>
<comment type="similarity">
    <text evidence="1">Belongs to the PsbJ family.</text>
</comment>
<protein>
    <recommendedName>
        <fullName evidence="1">Photosystem II reaction center protein J</fullName>
        <shortName evidence="1">PSII-J</shortName>
    </recommendedName>
</protein>
<keyword id="KW-0002">3D-structure</keyword>
<keyword id="KW-0150">Chloroplast</keyword>
<keyword id="KW-0472">Membrane</keyword>
<keyword id="KW-0602">Photosynthesis</keyword>
<keyword id="KW-0604">Photosystem II</keyword>
<keyword id="KW-0934">Plastid</keyword>
<keyword id="KW-0674">Reaction center</keyword>
<keyword id="KW-1185">Reference proteome</keyword>
<keyword id="KW-0793">Thylakoid</keyword>
<keyword id="KW-0812">Transmembrane</keyword>
<keyword id="KW-1133">Transmembrane helix</keyword>
<gene>
    <name evidence="1" type="primary">psbJ</name>
</gene>
<dbReference type="EMBL" id="AJ400848">
    <property type="protein sequence ID" value="CAB88743.1"/>
    <property type="molecule type" value="Genomic_DNA"/>
</dbReference>
<dbReference type="RefSeq" id="NP_054950.1">
    <property type="nucleotide sequence ID" value="NC_002202.1"/>
</dbReference>
<dbReference type="PDB" id="3JCU">
    <property type="method" value="EM"/>
    <property type="resolution" value="3.20 A"/>
    <property type="chains" value="J/j=1-40"/>
</dbReference>
<dbReference type="PDB" id="8Z9D">
    <property type="method" value="EM"/>
    <property type="resolution" value="3.22 A"/>
    <property type="chains" value="J/JJ/Jj/j=1-40"/>
</dbReference>
<dbReference type="PDBsum" id="3JCU"/>
<dbReference type="PDBsum" id="8Z9D"/>
<dbReference type="EMDB" id="EMD-39860"/>
<dbReference type="SMR" id="Q9M3L2"/>
<dbReference type="DIP" id="DIP-62016N"/>
<dbReference type="FunCoup" id="Q9M3L2">
    <property type="interactions" value="39"/>
</dbReference>
<dbReference type="IntAct" id="Q9M3L2">
    <property type="interactions" value="1"/>
</dbReference>
<dbReference type="STRING" id="3562.Q9M3L2"/>
<dbReference type="GeneID" id="2715615"/>
<dbReference type="KEGG" id="soe:2715615"/>
<dbReference type="InParanoid" id="Q9M3L2"/>
<dbReference type="Proteomes" id="UP001155700">
    <property type="component" value="Chloroplast Pltd"/>
</dbReference>
<dbReference type="GO" id="GO:0009535">
    <property type="term" value="C:chloroplast thylakoid membrane"/>
    <property type="evidence" value="ECO:0007669"/>
    <property type="project" value="UniProtKB-SubCell"/>
</dbReference>
<dbReference type="GO" id="GO:0009523">
    <property type="term" value="C:photosystem II"/>
    <property type="evidence" value="ECO:0000318"/>
    <property type="project" value="GO_Central"/>
</dbReference>
<dbReference type="GO" id="GO:0009539">
    <property type="term" value="C:photosystem II reaction center"/>
    <property type="evidence" value="ECO:0007669"/>
    <property type="project" value="InterPro"/>
</dbReference>
<dbReference type="GO" id="GO:0015979">
    <property type="term" value="P:photosynthesis"/>
    <property type="evidence" value="ECO:0007669"/>
    <property type="project" value="UniProtKB-UniRule"/>
</dbReference>
<dbReference type="Gene3D" id="6.10.250.2070">
    <property type="match status" value="1"/>
</dbReference>
<dbReference type="HAMAP" id="MF_01305">
    <property type="entry name" value="PSII_PsbJ"/>
    <property type="match status" value="1"/>
</dbReference>
<dbReference type="InterPro" id="IPR002682">
    <property type="entry name" value="PSII_PsbJ"/>
</dbReference>
<dbReference type="InterPro" id="IPR037267">
    <property type="entry name" value="PSII_PsbJ_sf"/>
</dbReference>
<dbReference type="NCBIfam" id="NF002722">
    <property type="entry name" value="PRK02565.1"/>
    <property type="match status" value="1"/>
</dbReference>
<dbReference type="PANTHER" id="PTHR34812">
    <property type="entry name" value="PHOTOSYSTEM II REACTION CENTER PROTEIN J"/>
    <property type="match status" value="1"/>
</dbReference>
<dbReference type="PANTHER" id="PTHR34812:SF3">
    <property type="entry name" value="PHOTOSYSTEM II REACTION CENTER PROTEIN J"/>
    <property type="match status" value="1"/>
</dbReference>
<dbReference type="Pfam" id="PF01788">
    <property type="entry name" value="PsbJ"/>
    <property type="match status" value="1"/>
</dbReference>
<dbReference type="SUPFAM" id="SSF161021">
    <property type="entry name" value="Photosystem II reaction center protein J, PsbJ"/>
    <property type="match status" value="1"/>
</dbReference>